<accession>B5XQE5</accession>
<comment type="function">
    <text evidence="1">Bifunctional serine/threonine kinase and phosphorylase involved in the regulation of the phosphoenolpyruvate synthase (PEPS) by catalyzing its phosphorylation/dephosphorylation.</text>
</comment>
<comment type="catalytic activity">
    <reaction evidence="1">
        <text>[pyruvate, water dikinase] + ADP = [pyruvate, water dikinase]-phosphate + AMP + H(+)</text>
        <dbReference type="Rhea" id="RHEA:46020"/>
        <dbReference type="Rhea" id="RHEA-COMP:11425"/>
        <dbReference type="Rhea" id="RHEA-COMP:11426"/>
        <dbReference type="ChEBI" id="CHEBI:15378"/>
        <dbReference type="ChEBI" id="CHEBI:43176"/>
        <dbReference type="ChEBI" id="CHEBI:68546"/>
        <dbReference type="ChEBI" id="CHEBI:456215"/>
        <dbReference type="ChEBI" id="CHEBI:456216"/>
        <dbReference type="EC" id="2.7.11.33"/>
    </reaction>
</comment>
<comment type="catalytic activity">
    <reaction evidence="1">
        <text>[pyruvate, water dikinase]-phosphate + phosphate + H(+) = [pyruvate, water dikinase] + diphosphate</text>
        <dbReference type="Rhea" id="RHEA:48580"/>
        <dbReference type="Rhea" id="RHEA-COMP:11425"/>
        <dbReference type="Rhea" id="RHEA-COMP:11426"/>
        <dbReference type="ChEBI" id="CHEBI:15378"/>
        <dbReference type="ChEBI" id="CHEBI:33019"/>
        <dbReference type="ChEBI" id="CHEBI:43176"/>
        <dbReference type="ChEBI" id="CHEBI:43474"/>
        <dbReference type="ChEBI" id="CHEBI:68546"/>
        <dbReference type="EC" id="2.7.4.28"/>
    </reaction>
</comment>
<comment type="similarity">
    <text evidence="1">Belongs to the pyruvate, phosphate/water dikinase regulatory protein family. PSRP subfamily.</text>
</comment>
<gene>
    <name type="ordered locus">KPK_2157</name>
</gene>
<reference key="1">
    <citation type="journal article" date="2008" name="PLoS Genet.">
        <title>Complete genome sequence of the N2-fixing broad host range endophyte Klebsiella pneumoniae 342 and virulence predictions verified in mice.</title>
        <authorList>
            <person name="Fouts D.E."/>
            <person name="Tyler H.L."/>
            <person name="DeBoy R.T."/>
            <person name="Daugherty S."/>
            <person name="Ren Q."/>
            <person name="Badger J.H."/>
            <person name="Durkin A.S."/>
            <person name="Huot H."/>
            <person name="Shrivastava S."/>
            <person name="Kothari S."/>
            <person name="Dodson R.J."/>
            <person name="Mohamoud Y."/>
            <person name="Khouri H."/>
            <person name="Roesch L.F.W."/>
            <person name="Krogfelt K.A."/>
            <person name="Struve C."/>
            <person name="Triplett E.W."/>
            <person name="Methe B.A."/>
        </authorList>
    </citation>
    <scope>NUCLEOTIDE SEQUENCE [LARGE SCALE GENOMIC DNA]</scope>
    <source>
        <strain>342</strain>
    </source>
</reference>
<dbReference type="EC" id="2.7.11.33" evidence="1"/>
<dbReference type="EC" id="2.7.4.28" evidence="1"/>
<dbReference type="EMBL" id="CP000964">
    <property type="protein sequence ID" value="ACI09840.1"/>
    <property type="molecule type" value="Genomic_DNA"/>
</dbReference>
<dbReference type="SMR" id="B5XQE5"/>
<dbReference type="KEGG" id="kpe:KPK_2157"/>
<dbReference type="HOGENOM" id="CLU_046206_1_0_6"/>
<dbReference type="BioCyc" id="KPNE507522:GI0B-2151-MONOMER"/>
<dbReference type="Proteomes" id="UP000001734">
    <property type="component" value="Chromosome"/>
</dbReference>
<dbReference type="GO" id="GO:0043531">
    <property type="term" value="F:ADP binding"/>
    <property type="evidence" value="ECO:0007669"/>
    <property type="project" value="UniProtKB-UniRule"/>
</dbReference>
<dbReference type="GO" id="GO:0005524">
    <property type="term" value="F:ATP binding"/>
    <property type="evidence" value="ECO:0007669"/>
    <property type="project" value="InterPro"/>
</dbReference>
<dbReference type="GO" id="GO:0016776">
    <property type="term" value="F:phosphotransferase activity, phosphate group as acceptor"/>
    <property type="evidence" value="ECO:0007669"/>
    <property type="project" value="UniProtKB-UniRule"/>
</dbReference>
<dbReference type="GO" id="GO:0004674">
    <property type="term" value="F:protein serine/threonine kinase activity"/>
    <property type="evidence" value="ECO:0007669"/>
    <property type="project" value="UniProtKB-UniRule"/>
</dbReference>
<dbReference type="HAMAP" id="MF_01062">
    <property type="entry name" value="PSRP"/>
    <property type="match status" value="1"/>
</dbReference>
<dbReference type="InterPro" id="IPR005177">
    <property type="entry name" value="Kinase-pyrophosphorylase"/>
</dbReference>
<dbReference type="InterPro" id="IPR026530">
    <property type="entry name" value="PSRP"/>
</dbReference>
<dbReference type="NCBIfam" id="NF003742">
    <property type="entry name" value="PRK05339.1"/>
    <property type="match status" value="1"/>
</dbReference>
<dbReference type="PANTHER" id="PTHR31756">
    <property type="entry name" value="PYRUVATE, PHOSPHATE DIKINASE REGULATORY PROTEIN 1, CHLOROPLASTIC"/>
    <property type="match status" value="1"/>
</dbReference>
<dbReference type="PANTHER" id="PTHR31756:SF3">
    <property type="entry name" value="PYRUVATE, PHOSPHATE DIKINASE REGULATORY PROTEIN 1, CHLOROPLASTIC"/>
    <property type="match status" value="1"/>
</dbReference>
<dbReference type="Pfam" id="PF03618">
    <property type="entry name" value="Kinase-PPPase"/>
    <property type="match status" value="1"/>
</dbReference>
<evidence type="ECO:0000255" key="1">
    <source>
        <dbReference type="HAMAP-Rule" id="MF_01062"/>
    </source>
</evidence>
<keyword id="KW-0418">Kinase</keyword>
<keyword id="KW-0547">Nucleotide-binding</keyword>
<keyword id="KW-0723">Serine/threonine-protein kinase</keyword>
<keyword id="KW-0808">Transferase</keyword>
<sequence>MESAVDRHVFYISDGTAITAEVLGHAVMSQFPVAISSVTLPFVENISRARAVKEQIDAIYQQTGIRPLVFYSIVIPEIRDIILQSEGFCQDIVQALVAPLQQELNLDPTPVAHRTHGLNPGNLIKYDARIAAIDYTLAHDDGISLRNLDQAQVILLGVSRCGKTPTSLYLAMQYGIRAANYPFIADDMDNLVLPASLKPLQHKMFGLTINPERLAAIREERRENSRYASLRQCRMEVTEVEALYRKNKIPCLNSTNYSVEEIATKIMDIMGLNRRMY</sequence>
<protein>
    <recommendedName>
        <fullName evidence="1">Putative phosphoenolpyruvate synthase regulatory protein</fullName>
        <shortName evidence="1">PEP synthase regulatory protein</shortName>
        <shortName evidence="1">PSRP</shortName>
        <ecNumber evidence="1">2.7.11.33</ecNumber>
        <ecNumber evidence="1">2.7.4.28</ecNumber>
    </recommendedName>
    <alternativeName>
        <fullName evidence="1">Pyruvate, water dikinase regulatory protein</fullName>
    </alternativeName>
</protein>
<organism>
    <name type="scientific">Klebsiella pneumoniae (strain 342)</name>
    <dbReference type="NCBI Taxonomy" id="507522"/>
    <lineage>
        <taxon>Bacteria</taxon>
        <taxon>Pseudomonadati</taxon>
        <taxon>Pseudomonadota</taxon>
        <taxon>Gammaproteobacteria</taxon>
        <taxon>Enterobacterales</taxon>
        <taxon>Enterobacteriaceae</taxon>
        <taxon>Klebsiella/Raoultella group</taxon>
        <taxon>Klebsiella</taxon>
        <taxon>Klebsiella pneumoniae complex</taxon>
    </lineage>
</organism>
<feature type="chain" id="PRO_1000136478" description="Putative phosphoenolpyruvate synthase regulatory protein">
    <location>
        <begin position="1"/>
        <end position="277"/>
    </location>
</feature>
<feature type="binding site" evidence="1">
    <location>
        <begin position="157"/>
        <end position="164"/>
    </location>
    <ligand>
        <name>ADP</name>
        <dbReference type="ChEBI" id="CHEBI:456216"/>
    </ligand>
</feature>
<proteinExistence type="inferred from homology"/>
<name>PSRP_KLEP3</name>